<protein>
    <recommendedName>
        <fullName evidence="3">Bradykinin-potentiating peptide 13b</fullName>
        <shortName evidence="3">BPP-13b</shortName>
    </recommendedName>
</protein>
<proteinExistence type="evidence at protein level"/>
<reference key="1">
    <citation type="journal article" date="2004" name="Peptides">
        <title>Identification of five new bradykinin potentiating peptides (BPPs) from Bothrops jararaca crude venom by using electrospray ionization tandem mass spectrometry after a two-step liquid chromatography.</title>
        <authorList>
            <person name="Ianzer D."/>
            <person name="Konno K."/>
            <person name="Marques-Porto R."/>
            <person name="Portaro F.C.V."/>
            <person name="Stoecklin R."/>
            <person name="de Camargo A.C.M."/>
            <person name="Pimenta D.C."/>
        </authorList>
    </citation>
    <scope>PROTEIN SEQUENCE</scope>
    <scope>FUNCTION</scope>
    <scope>SUBCELLULAR LOCATION</scope>
    <scope>MASS SPECTROMETRY</scope>
    <scope>PYROGLUTAMATE FORMATION AT GLN-1</scope>
    <source>
        <tissue>Venom</tissue>
    </source>
</reference>
<reference key="2">
    <citation type="journal article" date="2012" name="Mol. Cell. Proteomics">
        <title>Peptidomics of three Bothrops snake venoms: insights into the molecular diversification of proteomes and peptidomes.</title>
        <authorList>
            <person name="Tashima A.K."/>
            <person name="Zelanis A."/>
            <person name="Kitano E.S."/>
            <person name="Ianzer D."/>
            <person name="Melo R.L."/>
            <person name="Rioli V."/>
            <person name="Sant'anna S.S."/>
            <person name="Schenberg A.C."/>
            <person name="Camargo A.C."/>
            <person name="Serrano S.M.T."/>
        </authorList>
    </citation>
    <scope>PROTEIN SEQUENCE</scope>
    <scope>PYROGLUTAMATE FORMATION AT GLN-1</scope>
    <scope>MASS SPECTROMETRY</scope>
    <source>
        <tissue>Venom</tissue>
    </source>
</reference>
<keyword id="KW-0903">Direct protein sequencing</keyword>
<keyword id="KW-0382">Hypotensive agent</keyword>
<keyword id="KW-0481">Metalloenzyme inhibitor</keyword>
<keyword id="KW-0483">Metalloprotease inhibitor</keyword>
<keyword id="KW-0646">Protease inhibitor</keyword>
<keyword id="KW-0873">Pyrrolidone carboxylic acid</keyword>
<keyword id="KW-0964">Secreted</keyword>
<keyword id="KW-0800">Toxin</keyword>
<evidence type="ECO:0000269" key="1">
    <source>
    </source>
</evidence>
<evidence type="ECO:0000269" key="2">
    <source>
    </source>
</evidence>
<evidence type="ECO:0000303" key="3">
    <source>
    </source>
</evidence>
<evidence type="ECO:0000305" key="4"/>
<evidence type="ECO:0000305" key="5">
    <source>
    </source>
</evidence>
<comment type="function">
    <text evidence="1">This peptide both inhibits the activity of the angiotensin-converting enzyme (ACE) and enhances the action of bradykinin by inhibiting the peptidases that inactivate it. It acts as an indirect hypotensive agent.</text>
</comment>
<comment type="subcellular location">
    <subcellularLocation>
        <location evidence="1">Secreted</location>
    </subcellularLocation>
</comment>
<comment type="tissue specificity">
    <text evidence="5">Expressed by the venom gland.</text>
</comment>
<comment type="mass spectrometry" mass="1297.5" method="Electrospray" evidence="1"/>
<comment type="mass spectrometry" mass="1296.7" method="Electrospray" evidence="2"/>
<comment type="similarity">
    <text evidence="4">Belongs to the bradykinin-potentiating peptide family.</text>
</comment>
<sequence length="13" mass="1315">QGGLPRPGPEIPP</sequence>
<accession>P85169</accession>
<organism>
    <name type="scientific">Bothrops jararaca</name>
    <name type="common">Jararaca</name>
    <name type="synonym">Bothrops jajaraca</name>
    <dbReference type="NCBI Taxonomy" id="8724"/>
    <lineage>
        <taxon>Eukaryota</taxon>
        <taxon>Metazoa</taxon>
        <taxon>Chordata</taxon>
        <taxon>Craniata</taxon>
        <taxon>Vertebrata</taxon>
        <taxon>Euteleostomi</taxon>
        <taxon>Lepidosauria</taxon>
        <taxon>Squamata</taxon>
        <taxon>Bifurcata</taxon>
        <taxon>Unidentata</taxon>
        <taxon>Episquamata</taxon>
        <taxon>Toxicofera</taxon>
        <taxon>Serpentes</taxon>
        <taxon>Colubroidea</taxon>
        <taxon>Viperidae</taxon>
        <taxon>Crotalinae</taxon>
        <taxon>Bothrops</taxon>
    </lineage>
</organism>
<feature type="peptide" id="PRO_0000292924" description="Bradykinin-potentiating peptide 13b" evidence="1 2">
    <location>
        <begin position="1"/>
        <end position="13"/>
    </location>
</feature>
<feature type="modified residue" description="Pyrrolidone carboxylic acid" evidence="1 2">
    <location>
        <position position="1"/>
    </location>
</feature>
<name>BPPDB_BOTJA</name>
<dbReference type="GO" id="GO:0005576">
    <property type="term" value="C:extracellular region"/>
    <property type="evidence" value="ECO:0007669"/>
    <property type="project" value="UniProtKB-SubCell"/>
</dbReference>
<dbReference type="GO" id="GO:0030414">
    <property type="term" value="F:peptidase inhibitor activity"/>
    <property type="evidence" value="ECO:0007669"/>
    <property type="project" value="UniProtKB-KW"/>
</dbReference>
<dbReference type="GO" id="GO:0090729">
    <property type="term" value="F:toxin activity"/>
    <property type="evidence" value="ECO:0007669"/>
    <property type="project" value="UniProtKB-KW"/>
</dbReference>
<dbReference type="GO" id="GO:0008217">
    <property type="term" value="P:regulation of blood pressure"/>
    <property type="evidence" value="ECO:0007669"/>
    <property type="project" value="UniProtKB-KW"/>
</dbReference>